<sequence length="487" mass="55507">MRILFAAAECAPMIKVGGMGDVVGSLPPALKKLGHDVRLIIPGYGKLWTLMDIAPEPIFRSNTMGVDFSVFETKHPSNGLPIYLVGHPCFDSERIYGGEDEDWRFTFFASAVSEFAWNSWKPQVLHCHDWHTGMIPVWMHQDPEISTVFTIHNLKYQGPWRWKLDQITWCPWYMHGDHTMASAMLYADRVNAVSPTYSREIRTSEYGEKLEGLLNYISGKLRGILNGVDLDEWNPATDNSLPAKFSVDNISGRAINKRVLQERMGLEVNPDKYLMGMVGRLVDQKGIDLLLQVANRLLSYTDSQVVVLGTGDRYLESSLWQLAIEYPGRFSVFLTYDDALSRLIYGGADAFLMPSRFEPCGISQLLAMRYGAIPIVRKVGGLVDTVEPYNPMNETGSGFCFDRYEPIDFYTSLVRSWEEYRHQKSWKQLQLRAMSNKYSWDRSAKEYELMYKDVCGIKEPSPDAAEVEKFSYGQEADPSRKGKKIKL</sequence>
<reference key="1">
    <citation type="journal article" date="2007" name="PLoS Genet.">
        <title>Patterns and implications of gene gain and loss in the evolution of Prochlorococcus.</title>
        <authorList>
            <person name="Kettler G.C."/>
            <person name="Martiny A.C."/>
            <person name="Huang K."/>
            <person name="Zucker J."/>
            <person name="Coleman M.L."/>
            <person name="Rodrigue S."/>
            <person name="Chen F."/>
            <person name="Lapidus A."/>
            <person name="Ferriera S."/>
            <person name="Johnson J."/>
            <person name="Steglich C."/>
            <person name="Church G.M."/>
            <person name="Richardson P."/>
            <person name="Chisholm S.W."/>
        </authorList>
    </citation>
    <scope>NUCLEOTIDE SEQUENCE [LARGE SCALE GENOMIC DNA]</scope>
    <source>
        <strain>NATL2A</strain>
    </source>
</reference>
<gene>
    <name evidence="1" type="primary">glgA</name>
    <name type="ordered locus">PMN2A_0045</name>
</gene>
<feature type="chain" id="PRO_0000230255" description="Glycogen synthase">
    <location>
        <begin position="1"/>
        <end position="487"/>
    </location>
</feature>
<feature type="region of interest" description="Disordered" evidence="2">
    <location>
        <begin position="468"/>
        <end position="487"/>
    </location>
</feature>
<feature type="binding site" evidence="1">
    <location>
        <position position="15"/>
    </location>
    <ligand>
        <name>ADP-alpha-D-glucose</name>
        <dbReference type="ChEBI" id="CHEBI:57498"/>
    </ligand>
</feature>
<evidence type="ECO:0000255" key="1">
    <source>
        <dbReference type="HAMAP-Rule" id="MF_00484"/>
    </source>
</evidence>
<evidence type="ECO:0000256" key="2">
    <source>
        <dbReference type="SAM" id="MobiDB-lite"/>
    </source>
</evidence>
<dbReference type="EC" id="2.4.1.21" evidence="1"/>
<dbReference type="EMBL" id="CP000095">
    <property type="protein sequence ID" value="AAZ57537.1"/>
    <property type="molecule type" value="Genomic_DNA"/>
</dbReference>
<dbReference type="RefSeq" id="WP_011293579.1">
    <property type="nucleotide sequence ID" value="NC_007335.2"/>
</dbReference>
<dbReference type="SMR" id="Q46LU1"/>
<dbReference type="STRING" id="59920.PMN2A_0045"/>
<dbReference type="CAZy" id="GT5">
    <property type="family name" value="Glycosyltransferase Family 5"/>
</dbReference>
<dbReference type="KEGG" id="pmn:PMN2A_0045"/>
<dbReference type="HOGENOM" id="CLU_009583_18_2_3"/>
<dbReference type="OrthoDB" id="9808590at2"/>
<dbReference type="PhylomeDB" id="Q46LU1"/>
<dbReference type="UniPathway" id="UPA00164"/>
<dbReference type="Proteomes" id="UP000002535">
    <property type="component" value="Chromosome"/>
</dbReference>
<dbReference type="GO" id="GO:0009011">
    <property type="term" value="F:alpha-1,4-glucan glucosyltransferase (ADP-glucose donor) activity"/>
    <property type="evidence" value="ECO:0007669"/>
    <property type="project" value="UniProtKB-UniRule"/>
</dbReference>
<dbReference type="GO" id="GO:0004373">
    <property type="term" value="F:alpha-1,4-glucan glucosyltransferase (UDP-glucose donor) activity"/>
    <property type="evidence" value="ECO:0007669"/>
    <property type="project" value="InterPro"/>
</dbReference>
<dbReference type="GO" id="GO:0005978">
    <property type="term" value="P:glycogen biosynthetic process"/>
    <property type="evidence" value="ECO:0007669"/>
    <property type="project" value="UniProtKB-UniRule"/>
</dbReference>
<dbReference type="CDD" id="cd03791">
    <property type="entry name" value="GT5_Glycogen_synthase_DULL1-like"/>
    <property type="match status" value="1"/>
</dbReference>
<dbReference type="Gene3D" id="3.40.50.2000">
    <property type="entry name" value="Glycogen Phosphorylase B"/>
    <property type="match status" value="2"/>
</dbReference>
<dbReference type="HAMAP" id="MF_00484">
    <property type="entry name" value="Glycogen_synth"/>
    <property type="match status" value="1"/>
</dbReference>
<dbReference type="InterPro" id="IPR001296">
    <property type="entry name" value="Glyco_trans_1"/>
</dbReference>
<dbReference type="InterPro" id="IPR011835">
    <property type="entry name" value="GS/SS"/>
</dbReference>
<dbReference type="InterPro" id="IPR013534">
    <property type="entry name" value="Starch_synth_cat_dom"/>
</dbReference>
<dbReference type="NCBIfam" id="TIGR02095">
    <property type="entry name" value="glgA"/>
    <property type="match status" value="1"/>
</dbReference>
<dbReference type="NCBIfam" id="NF001900">
    <property type="entry name" value="PRK00654.1-3"/>
    <property type="match status" value="1"/>
</dbReference>
<dbReference type="PANTHER" id="PTHR45825:SF11">
    <property type="entry name" value="ALPHA AMYLASE DOMAIN-CONTAINING PROTEIN"/>
    <property type="match status" value="1"/>
</dbReference>
<dbReference type="PANTHER" id="PTHR45825">
    <property type="entry name" value="GRANULE-BOUND STARCH SYNTHASE 1, CHLOROPLASTIC/AMYLOPLASTIC"/>
    <property type="match status" value="1"/>
</dbReference>
<dbReference type="Pfam" id="PF08323">
    <property type="entry name" value="Glyco_transf_5"/>
    <property type="match status" value="1"/>
</dbReference>
<dbReference type="Pfam" id="PF00534">
    <property type="entry name" value="Glycos_transf_1"/>
    <property type="match status" value="1"/>
</dbReference>
<dbReference type="SUPFAM" id="SSF53756">
    <property type="entry name" value="UDP-Glycosyltransferase/glycogen phosphorylase"/>
    <property type="match status" value="1"/>
</dbReference>
<comment type="function">
    <text evidence="1">Synthesizes alpha-1,4-glucan chains using ADP-glucose.</text>
</comment>
<comment type="catalytic activity">
    <reaction evidence="1">
        <text>[(1-&gt;4)-alpha-D-glucosyl](n) + ADP-alpha-D-glucose = [(1-&gt;4)-alpha-D-glucosyl](n+1) + ADP + H(+)</text>
        <dbReference type="Rhea" id="RHEA:18189"/>
        <dbReference type="Rhea" id="RHEA-COMP:9584"/>
        <dbReference type="Rhea" id="RHEA-COMP:9587"/>
        <dbReference type="ChEBI" id="CHEBI:15378"/>
        <dbReference type="ChEBI" id="CHEBI:15444"/>
        <dbReference type="ChEBI" id="CHEBI:57498"/>
        <dbReference type="ChEBI" id="CHEBI:456216"/>
        <dbReference type="EC" id="2.4.1.21"/>
    </reaction>
</comment>
<comment type="pathway">
    <text evidence="1">Glycan biosynthesis; glycogen biosynthesis.</text>
</comment>
<comment type="similarity">
    <text evidence="1">Belongs to the glycosyltransferase 1 family. Bacterial/plant glycogen synthase subfamily.</text>
</comment>
<proteinExistence type="inferred from homology"/>
<accession>Q46LU1</accession>
<name>GLGA_PROMT</name>
<protein>
    <recommendedName>
        <fullName evidence="1">Glycogen synthase</fullName>
        <ecNumber evidence="1">2.4.1.21</ecNumber>
    </recommendedName>
    <alternativeName>
        <fullName evidence="1">Starch [bacterial glycogen] synthase</fullName>
    </alternativeName>
</protein>
<organism>
    <name type="scientific">Prochlorococcus marinus (strain NATL2A)</name>
    <dbReference type="NCBI Taxonomy" id="59920"/>
    <lineage>
        <taxon>Bacteria</taxon>
        <taxon>Bacillati</taxon>
        <taxon>Cyanobacteriota</taxon>
        <taxon>Cyanophyceae</taxon>
        <taxon>Synechococcales</taxon>
        <taxon>Prochlorococcaceae</taxon>
        <taxon>Prochlorococcus</taxon>
    </lineage>
</organism>
<keyword id="KW-0320">Glycogen biosynthesis</keyword>
<keyword id="KW-0328">Glycosyltransferase</keyword>
<keyword id="KW-1185">Reference proteome</keyword>
<keyword id="KW-0808">Transferase</keyword>